<dbReference type="EMBL" id="KC417354">
    <property type="protein sequence ID" value="AGI41289.1"/>
    <property type="molecule type" value="mRNA"/>
</dbReference>
<dbReference type="EMBL" id="KC417355">
    <property type="protein sequence ID" value="AGI41290.1"/>
    <property type="molecule type" value="mRNA"/>
</dbReference>
<dbReference type="EMBL" id="KC417356">
    <property type="protein sequence ID" value="AGI41291.1"/>
    <property type="molecule type" value="mRNA"/>
</dbReference>
<dbReference type="EMBL" id="KC417357">
    <property type="protein sequence ID" value="AGI41292.1"/>
    <property type="molecule type" value="mRNA"/>
</dbReference>
<dbReference type="EMBL" id="KC417358">
    <property type="protein sequence ID" value="AGI41293.1"/>
    <property type="molecule type" value="mRNA"/>
</dbReference>
<dbReference type="EMBL" id="KC417359">
    <property type="protein sequence ID" value="AGI41294.1"/>
    <property type="molecule type" value="mRNA"/>
</dbReference>
<dbReference type="EMBL" id="KC417360">
    <property type="protein sequence ID" value="AGI41295.1"/>
    <property type="molecule type" value="mRNA"/>
</dbReference>
<dbReference type="EMBL" id="KC417361">
    <property type="protein sequence ID" value="AGI41296.1"/>
    <property type="molecule type" value="mRNA"/>
</dbReference>
<dbReference type="EMBL" id="KC417362">
    <property type="protein sequence ID" value="AGI41297.1"/>
    <property type="molecule type" value="mRNA"/>
</dbReference>
<dbReference type="EMBL" id="KC417363">
    <property type="protein sequence ID" value="AGI41298.1"/>
    <property type="molecule type" value="mRNA"/>
</dbReference>
<dbReference type="EMBL" id="KC417364">
    <property type="protein sequence ID" value="AGI41299.1"/>
    <property type="molecule type" value="mRNA"/>
</dbReference>
<dbReference type="EMBL" id="KC417365">
    <property type="protein sequence ID" value="AGI41300.1"/>
    <property type="molecule type" value="mRNA"/>
</dbReference>
<dbReference type="EMBL" id="KC417366">
    <property type="protein sequence ID" value="AGI41301.1"/>
    <property type="molecule type" value="mRNA"/>
</dbReference>
<dbReference type="EMBL" id="KC417367">
    <property type="protein sequence ID" value="AGI41302.1"/>
    <property type="molecule type" value="mRNA"/>
</dbReference>
<dbReference type="EMBL" id="KC417368">
    <property type="protein sequence ID" value="AGI41303.1"/>
    <property type="molecule type" value="mRNA"/>
</dbReference>
<dbReference type="EMBL" id="KC417369">
    <property type="protein sequence ID" value="AGI41304.1"/>
    <property type="molecule type" value="mRNA"/>
</dbReference>
<dbReference type="EMBL" id="KC417370">
    <property type="protein sequence ID" value="AGI41305.1"/>
    <property type="molecule type" value="mRNA"/>
</dbReference>
<dbReference type="EMBL" id="KC417371">
    <property type="protein sequence ID" value="AGI41306.1"/>
    <property type="molecule type" value="mRNA"/>
</dbReference>
<dbReference type="EMBL" id="KC417372">
    <property type="protein sequence ID" value="AGI41307.1"/>
    <property type="molecule type" value="mRNA"/>
</dbReference>
<dbReference type="EMBL" id="CM002293">
    <property type="protein sequence ID" value="ESW19950.1"/>
    <property type="molecule type" value="Genomic_DNA"/>
</dbReference>
<dbReference type="EMBL" id="EF571267">
    <property type="protein sequence ID" value="ABU54808.1"/>
    <property type="molecule type" value="mRNA"/>
</dbReference>
<dbReference type="EMBL" id="EF571268">
    <property type="protein sequence ID" value="ABU54809.1"/>
    <property type="molecule type" value="mRNA"/>
</dbReference>
<dbReference type="EMBL" id="EF571269">
    <property type="protein sequence ID" value="ABU54810.1"/>
    <property type="molecule type" value="mRNA"/>
</dbReference>
<dbReference type="EMBL" id="EF571270">
    <property type="protein sequence ID" value="ABU54811.1"/>
    <property type="molecule type" value="mRNA"/>
</dbReference>
<dbReference type="EMBL" id="EF571271">
    <property type="protein sequence ID" value="ABU54812.1"/>
    <property type="molecule type" value="mRNA"/>
</dbReference>
<dbReference type="EMBL" id="EF571272">
    <property type="protein sequence ID" value="ABU54813.1"/>
    <property type="molecule type" value="mRNA"/>
</dbReference>
<dbReference type="EMBL" id="EF571273">
    <property type="protein sequence ID" value="ABU54814.1"/>
    <property type="molecule type" value="mRNA"/>
</dbReference>
<dbReference type="EMBL" id="EF571274">
    <property type="protein sequence ID" value="ABU54815.1"/>
    <property type="molecule type" value="mRNA"/>
</dbReference>
<dbReference type="EMBL" id="EF571275">
    <property type="protein sequence ID" value="ABU54816.1"/>
    <property type="molecule type" value="mRNA"/>
</dbReference>
<dbReference type="EMBL" id="EF571276">
    <property type="protein sequence ID" value="ABU54817.1"/>
    <property type="molecule type" value="mRNA"/>
</dbReference>
<dbReference type="EMBL" id="EF571277">
    <property type="protein sequence ID" value="ABU54818.1"/>
    <property type="molecule type" value="mRNA"/>
</dbReference>
<dbReference type="EMBL" id="FJ389546">
    <property type="protein sequence ID" value="ACQ59192.1"/>
    <property type="molecule type" value="mRNA"/>
</dbReference>
<dbReference type="EMBL" id="FJ389547">
    <property type="protein sequence ID" value="ACQ59193.1"/>
    <property type="molecule type" value="mRNA"/>
</dbReference>
<dbReference type="RefSeq" id="XP_007147956.1">
    <property type="nucleotide sequence ID" value="XM_007147894.1"/>
</dbReference>
<dbReference type="SMR" id="V7BSD0"/>
<dbReference type="STRING" id="3885.V7BSD0"/>
<dbReference type="EnsemblPlants" id="ESW19950">
    <property type="protein sequence ID" value="ESW19950"/>
    <property type="gene ID" value="PHAVU_006G168400g"/>
</dbReference>
<dbReference type="Gramene" id="ESW19950">
    <property type="protein sequence ID" value="ESW19950"/>
    <property type="gene ID" value="PHAVU_006G168400g"/>
</dbReference>
<dbReference type="eggNOG" id="KOG1670">
    <property type="taxonomic scope" value="Eukaryota"/>
</dbReference>
<dbReference type="OMA" id="VKPRICL"/>
<dbReference type="OrthoDB" id="590761at2759"/>
<dbReference type="Proteomes" id="UP000000226">
    <property type="component" value="Chromosome 6"/>
</dbReference>
<dbReference type="GO" id="GO:0005737">
    <property type="term" value="C:cytoplasm"/>
    <property type="evidence" value="ECO:0000250"/>
    <property type="project" value="UniProtKB"/>
</dbReference>
<dbReference type="GO" id="GO:0016281">
    <property type="term" value="C:eukaryotic translation initiation factor 4F complex"/>
    <property type="evidence" value="ECO:0007669"/>
    <property type="project" value="TreeGrafter"/>
</dbReference>
<dbReference type="GO" id="GO:0005634">
    <property type="term" value="C:nucleus"/>
    <property type="evidence" value="ECO:0000250"/>
    <property type="project" value="UniProtKB"/>
</dbReference>
<dbReference type="GO" id="GO:0000340">
    <property type="term" value="F:RNA 7-methylguanosine cap binding"/>
    <property type="evidence" value="ECO:0007669"/>
    <property type="project" value="TreeGrafter"/>
</dbReference>
<dbReference type="GO" id="GO:0003723">
    <property type="term" value="F:RNA binding"/>
    <property type="evidence" value="ECO:0000250"/>
    <property type="project" value="UniProtKB"/>
</dbReference>
<dbReference type="GO" id="GO:0003743">
    <property type="term" value="F:translation initiation factor activity"/>
    <property type="evidence" value="ECO:0000250"/>
    <property type="project" value="UniProtKB"/>
</dbReference>
<dbReference type="GO" id="GO:0051607">
    <property type="term" value="P:defense response to virus"/>
    <property type="evidence" value="ECO:0000250"/>
    <property type="project" value="UniProtKB"/>
</dbReference>
<dbReference type="GO" id="GO:0006417">
    <property type="term" value="P:regulation of translation"/>
    <property type="evidence" value="ECO:0007669"/>
    <property type="project" value="UniProtKB-KW"/>
</dbReference>
<dbReference type="GO" id="GO:0006413">
    <property type="term" value="P:translational initiation"/>
    <property type="evidence" value="ECO:0000250"/>
    <property type="project" value="UniProtKB"/>
</dbReference>
<dbReference type="FunFam" id="3.30.760.10:FF:000003">
    <property type="entry name" value="Eukaryotic translation initiation factor 4E"/>
    <property type="match status" value="1"/>
</dbReference>
<dbReference type="Gene3D" id="3.30.760.10">
    <property type="entry name" value="RNA Cap, Translation Initiation Factor Eif4e"/>
    <property type="match status" value="1"/>
</dbReference>
<dbReference type="InterPro" id="IPR023398">
    <property type="entry name" value="TIF_eIF4e-like"/>
</dbReference>
<dbReference type="InterPro" id="IPR001040">
    <property type="entry name" value="TIF_eIF_4E"/>
</dbReference>
<dbReference type="InterPro" id="IPR019770">
    <property type="entry name" value="TIF_eIF_4E_CS"/>
</dbReference>
<dbReference type="PANTHER" id="PTHR11960">
    <property type="entry name" value="EUKARYOTIC TRANSLATION INITIATION FACTOR 4E RELATED"/>
    <property type="match status" value="1"/>
</dbReference>
<dbReference type="PANTHER" id="PTHR11960:SF8">
    <property type="entry name" value="EUKARYOTIC TRANSLATION INITIATION FACTOR 4E1-RELATED"/>
    <property type="match status" value="1"/>
</dbReference>
<dbReference type="Pfam" id="PF01652">
    <property type="entry name" value="IF4E"/>
    <property type="match status" value="1"/>
</dbReference>
<dbReference type="SUPFAM" id="SSF55418">
    <property type="entry name" value="eIF4e-like"/>
    <property type="match status" value="1"/>
</dbReference>
<dbReference type="PROSITE" id="PS00813">
    <property type="entry name" value="IF4E"/>
    <property type="match status" value="1"/>
</dbReference>
<proteinExistence type="evidence at protein level"/>
<comment type="function">
    <text evidence="2 5 6">Component of the protein complex eIF4F, which is involved in the recognition of the mRNA cap, ATP-dependent unwinding of 5'-terminal secondary structure and recruitment of mRNA to the ribosome (By similarity). Recognizes and binds the 7-methylguanosine-containing mRNA cap during an early step in the initiation of protein synthesis and facilitates ribosome binding by inducing the unwinding of the mRNAs secondary structures (By similarity). Key component of recessive resistance to potyviruses (PubMed:20447274, PubMed:23933781).</text>
</comment>
<comment type="function">
    <text evidence="5 6">(Microbial infection) Susceptibility host factor required for viral infection by recruiting viral RNAs to the host ribosomal complex via an interaction with viral genome-linked protein (VPg).</text>
</comment>
<comment type="subunit">
    <text evidence="2">EIF4F is a multi-subunit complex, the composition of which varies with external and internal environmental conditions (By similarity). It is composed of at least EIF4A, EIF4E and EIF4G (By similarity). EIF4E is also known to interact with other partners (By similarity). In higher plants two isoforms of EIF4F have been identified, named isoform EIF4F and isoform EIF(iso)4F (By similarity). Isoform EIF4F has subunits p220 and p26, whereas isoform EIF(iso)4F has subunits p82 and p28 (By similarity).</text>
</comment>
<comment type="subunit">
    <text evidence="10 11">(Microbial infection) Interacts with potyvirus viral genome-linked protein (VPg); this interaction is possible in susceptible hosts but impaired in resistant plants.</text>
</comment>
<comment type="subcellular location">
    <subcellularLocation>
        <location evidence="1">Nucleus</location>
    </subcellularLocation>
    <subcellularLocation>
        <location evidence="1">Cytoplasm</location>
    </subcellularLocation>
</comment>
<comment type="PTM">
    <text evidence="2">According to the redox status, the Cys-128-Cys-166 disulfide bridge may have a role in regulating protein function by affecting its ability to bind capped mRNA.</text>
</comment>
<comment type="polymorphism">
    <text evidence="5 6">Variant present in the strains cv. USLK1, cv. USCR8, cv. USCR7, cv. Sonesta, cv. Polder, cv. Paloma, cv. Laureat and cv. Baby Bop, allele PveIF4E(4), confers an increased resistance to clover yellow vein virus (ClYVV) strain NY (ClYVV-NY) but susceptibility to bean common mosaic necrosis virus (BCMNV) strain NL 3D (BCMNV-NL 3D).</text>
</comment>
<comment type="polymorphism">
    <text evidence="6">Variant present in the strains cv. GN 1140, cv. Black Knight, cv. Amanda, cv. Imuna, cv. Clipper and cv. CY-10 S4, alleles PveIF4E(3) and cyv, confers an increased resistance to clover yellow vein virus (ClYVV) strain NY (ClYVV-NY) but susceptibility to bean common mosaic necrosis virus (BCMNV) strain NL 3D (BCMNV-NL 3D).</text>
</comment>
<comment type="polymorphism">
    <text evidence="6">Variant present in the strains cv. Jolanda, cv. Imuna and cv. Evolutie, allele desc, confers an increased resistance to clover yellow vein virus (ClYVV) strain NY (ClYVV-NY) but susceptibility to bean common mosaic necrosis virus (BCMNV) strain NL 3D (BCMNV-NL 3D).</text>
</comment>
<comment type="polymorphism">
    <text evidence="6">Variant present in the strains cv. IVT 7214, cv. B/R RIL 105-25, cv. USWK-6 and cv. USWKH x H S4, allele bc-3, confers an increased resistance to clover yellow vein virus (ClYVV) strain NY (ClYVV-NY) and to bean common mosaic necrosis virus (BCMNV) strain NL 3D (BCMNV-NL 3D).</text>
</comment>
<comment type="polymorphism">
    <text evidence="6">Variant present in the strains cv. Raven, allele PveIF4E(2)Raven, allele PveIF4E(2), confers an increased resistance to clover yellow vein virus (ClYVV) strain NY (ClYVV-NY) and to bean common mosaic necrosis virus (BCMNV) strain NL 3D (BCMNV-NL 3D).</text>
</comment>
<comment type="miscellaneous">
    <text evidence="10 11">Displayed sequence is allele PveIF4E(1), sensitive to potyviruses such as clover yellow vein virus (ClYVV) and bean common mosaic necrosis virus (BCMNV).</text>
</comment>
<comment type="similarity">
    <text evidence="9">Belongs to the eukaryotic initiation factor 4E family.</text>
</comment>
<accession>V7BSD0</accession>
<accession>D3TI49</accession>
<accession>D3TI54</accession>
<accession>G8XRX6</accession>
<accession>G8XRX7</accession>
<accession>M4Y728</accession>
<accession>M4Y734</accession>
<accession>M4Y7P1</accession>
<accession>M4YAW3</accession>
<evidence type="ECO:0000250" key="1">
    <source>
        <dbReference type="UniProtKB" id="C6ZJZ3"/>
    </source>
</evidence>
<evidence type="ECO:0000250" key="2">
    <source>
        <dbReference type="UniProtKB" id="P29557"/>
    </source>
</evidence>
<evidence type="ECO:0000250" key="3">
    <source>
        <dbReference type="UniProtKB" id="Q00LS8"/>
    </source>
</evidence>
<evidence type="ECO:0000256" key="4">
    <source>
        <dbReference type="SAM" id="MobiDB-lite"/>
    </source>
</evidence>
<evidence type="ECO:0000269" key="5">
    <source>
    </source>
</evidence>
<evidence type="ECO:0000269" key="6">
    <source>
    </source>
</evidence>
<evidence type="ECO:0000303" key="7">
    <source>
    </source>
</evidence>
<evidence type="ECO:0000303" key="8">
    <source>
    </source>
</evidence>
<evidence type="ECO:0000305" key="9"/>
<evidence type="ECO:0000305" key="10">
    <source>
    </source>
</evidence>
<evidence type="ECO:0000305" key="11">
    <source>
    </source>
</evidence>
<evidence type="ECO:0000312" key="12">
    <source>
        <dbReference type="EMBL" id="ESW19950.1"/>
    </source>
</evidence>
<name>IF4E1_PHAVU</name>
<keyword id="KW-0963">Cytoplasm</keyword>
<keyword id="KW-1015">Disulfide bond</keyword>
<keyword id="KW-0945">Host-virus interaction</keyword>
<keyword id="KW-0396">Initiation factor</keyword>
<keyword id="KW-0539">Nucleus</keyword>
<keyword id="KW-0611">Plant defense</keyword>
<keyword id="KW-0648">Protein biosynthesis</keyword>
<keyword id="KW-1185">Reference proteome</keyword>
<keyword id="KW-0694">RNA-binding</keyword>
<keyword id="KW-0810">Translation regulation</keyword>
<organism>
    <name type="scientific">Phaseolus vulgaris</name>
    <name type="common">Kidney bean</name>
    <name type="synonym">French bean</name>
    <dbReference type="NCBI Taxonomy" id="3885"/>
    <lineage>
        <taxon>Eukaryota</taxon>
        <taxon>Viridiplantae</taxon>
        <taxon>Streptophyta</taxon>
        <taxon>Embryophyta</taxon>
        <taxon>Tracheophyta</taxon>
        <taxon>Spermatophyta</taxon>
        <taxon>Magnoliopsida</taxon>
        <taxon>eudicotyledons</taxon>
        <taxon>Gunneridae</taxon>
        <taxon>Pentapetalae</taxon>
        <taxon>rosids</taxon>
        <taxon>fabids</taxon>
        <taxon>Fabales</taxon>
        <taxon>Fabaceae</taxon>
        <taxon>Papilionoideae</taxon>
        <taxon>50 kb inversion clade</taxon>
        <taxon>NPAAA clade</taxon>
        <taxon>indigoferoid/millettioid clade</taxon>
        <taxon>Phaseoleae</taxon>
        <taxon>Phaseolus</taxon>
    </lineage>
</organism>
<protein>
    <recommendedName>
        <fullName evidence="7 8">Eukaryotic translation initiation factor 4E-1</fullName>
        <shortName evidence="7 8">PveIF4E</shortName>
        <shortName evidence="7 8">eIF-4E-1</shortName>
    </recommendedName>
    <alternativeName>
        <fullName evidence="9">eIF-4F 25 kDa subunit</fullName>
    </alternativeName>
    <alternativeName>
        <fullName evidence="9">eIF-4F p26 subunit</fullName>
    </alternativeName>
    <alternativeName>
        <fullName evidence="7 8">mRNA cap-binding protein</fullName>
    </alternativeName>
</protein>
<sequence length="230" mass="26231">MVVEDSQKSTITDEQNPSRVDNDDDDLEDGEILEDADDAASAASKPPSAFLRNPHPLENSWTFWFDNPSAKSKQAAWGSSIRPIYTFSTVEEFWSIYNNIHHPSKLGVGADFHCFKHKIEPKWEDPICANGGKWTMTFQRGKSDTSWLYTLLAMIGEQFDYGDEICGAVVNVRNRQDKISIWTKNASNEAAQMSIGKQWKEFLDYNEPIGFIFHEDAKKHERSAKNKYAI</sequence>
<feature type="chain" id="PRO_0000454066" description="Eukaryotic translation initiation factor 4E-1">
    <location>
        <begin position="1"/>
        <end position="230"/>
    </location>
</feature>
<feature type="region of interest" description="Disordered" evidence="4">
    <location>
        <begin position="1"/>
        <end position="53"/>
    </location>
</feature>
<feature type="region of interest" description="EIF4G-binding" evidence="3">
    <location>
        <begin position="55"/>
        <end position="58"/>
    </location>
</feature>
<feature type="region of interest" description="EIF4G-binding" evidence="3">
    <location>
        <begin position="65"/>
        <end position="101"/>
    </location>
</feature>
<feature type="region of interest" description="EIF4G-binding" evidence="3">
    <location>
        <begin position="149"/>
        <end position="158"/>
    </location>
</feature>
<feature type="compositionally biased region" description="Polar residues" evidence="4">
    <location>
        <begin position="8"/>
        <end position="19"/>
    </location>
</feature>
<feature type="compositionally biased region" description="Acidic residues" evidence="4">
    <location>
        <begin position="22"/>
        <end position="38"/>
    </location>
</feature>
<feature type="compositionally biased region" description="Low complexity" evidence="4">
    <location>
        <begin position="39"/>
        <end position="49"/>
    </location>
</feature>
<feature type="binding site" evidence="2">
    <location>
        <begin position="73"/>
        <end position="78"/>
    </location>
    <ligand>
        <name>mRNA</name>
        <dbReference type="ChEBI" id="CHEBI:33699"/>
    </ligand>
    <ligandPart>
        <name>N(7)-methylguanosine 5'-triphosphate group</name>
        <dbReference type="ChEBI" id="CHEBI:74429"/>
        <note>m7GTP residue in mRNA cap</note>
    </ligandPart>
</feature>
<feature type="binding site" evidence="2">
    <location>
        <position position="105"/>
    </location>
    <ligand>
        <name>mRNA</name>
        <dbReference type="ChEBI" id="CHEBI:33699"/>
    </ligand>
    <ligandPart>
        <name>N(7)-methylguanosine 5'-triphosphate group</name>
        <dbReference type="ChEBI" id="CHEBI:74429"/>
        <note>m7GTP residue in mRNA cap</note>
    </ligandPart>
</feature>
<feature type="binding site" evidence="2">
    <location>
        <begin position="123"/>
        <end position="124"/>
    </location>
    <ligand>
        <name>mRNA</name>
        <dbReference type="ChEBI" id="CHEBI:33699"/>
    </ligand>
    <ligandPart>
        <name>N(7)-methylguanosine 5'-triphosphate group</name>
        <dbReference type="ChEBI" id="CHEBI:74429"/>
        <note>m7GTP residue in mRNA cap</note>
    </ligandPart>
</feature>
<feature type="binding site" evidence="2">
    <location>
        <begin position="173"/>
        <end position="178"/>
    </location>
    <ligand>
        <name>mRNA</name>
        <dbReference type="ChEBI" id="CHEBI:33699"/>
    </ligand>
    <ligandPart>
        <name>N(7)-methylguanosine 5'-triphosphate group</name>
        <dbReference type="ChEBI" id="CHEBI:74429"/>
        <note>m7GTP residue in mRNA cap</note>
    </ligandPart>
</feature>
<feature type="binding site" evidence="3">
    <location>
        <begin position="218"/>
        <end position="222"/>
    </location>
    <ligand>
        <name>mRNA</name>
        <dbReference type="ChEBI" id="CHEBI:33699"/>
    </ligand>
    <ligandPart>
        <name>N(7)-methylguanosine 5'-triphosphate group</name>
        <dbReference type="ChEBI" id="CHEBI:74429"/>
        <note>m7GTP residue in mRNA cap</note>
    </ligandPart>
</feature>
<feature type="disulfide bond" evidence="2">
    <location>
        <begin position="128"/>
        <end position="166"/>
    </location>
</feature>
<feature type="sequence variant" description="In strain: Sonesta, Polder, Paloma, Laureat, Baby Bop, Hystyle and Midnight. In strain: GN 1140, Black Knight, Amanda, Imuna, Clipper and CY-10 S4, alleles PveIF4E(3) and cyv. In strain: Jolanda, Imuna and Evolutie, allele desc. In strain: IVT 7214, B/R RIL 105-25, USWK-6 and USWKH x H S4, allele bc-3." evidence="6">
    <original>S</original>
    <variation>T</variation>
    <location>
        <position position="6"/>
    </location>
</feature>
<feature type="sequence variant" description="In strain: USLK1, USCR8 and USCR7. In strain: Imuna, Clipper and CY-10 S4, alleles PveIF4E(3) and cyv. In strain: Jolanda, Imuna and Evolutie, allele desc. In strain: Raven, allele PveIF4E(2). In strain: IVT 7214, B/R RIL 105-25, USWK-6 and USWKH x H S4, allele bc-3." evidence="5 6">
    <original>N</original>
    <variation>K</variation>
    <location>
        <position position="53"/>
    </location>
</feature>
<feature type="sequence variant" description="In strain: USLK1, USCR8 and USCR7. In strain: Imuna, Clipper and CY-10 S4, alleles PveIF4E(3) and cyv. In strain: Imuna and Evolutie, allele desc. In strain: Raven, allele PveIF4E(2). In strain: IVT 7214, B/R RIL 105-25, USWK-6 and USWKH x H S4, allele bc-3." evidence="5 6">
    <original>F</original>
    <variation>Y</variation>
    <location>
        <position position="65"/>
    </location>
</feature>
<feature type="sequence variant" description="In strain: USLK1, USCR8, USCR7, Sonesta, Polder, Paloma, Laureat and Baby Bop, allele PveIF4E(4). In strain: GN 1140, Black Knight, Amanda, Imuna, Clipper and CY-10 S4, alleles PveIF4E(3) and cyv. In strain: Jolanda, Imuna and Evolutie, allele desc. In strain: Raven, allele PveIF4E(2). In strain: IVT 7214, B/R RIL 105-25, USWK-6 and USWKH x H S4, allele bc-3." evidence="5 6">
    <original>A</original>
    <variation>E</variation>
    <location>
        <position position="76"/>
    </location>
</feature>
<feature type="sequence variant" description="In strain: USLK1, USCR8 and USCR7. In strain: IVT 7214, B/R RIL 105-25, USWK-6 and USWKH x H S4, allele bc-3." evidence="5 6">
    <original>D</original>
    <variation>G</variation>
    <location>
        <position position="111"/>
    </location>
</feature>
<feature type="sequence variant" description="In strain: Sonesta, Polder, Paloma, Laureat, Baby Bop, Hystyle and Midnight. In strain, GN 1140, Black Knight, Amanda, Imuna, Clipper and CY-10 S4, alleles PveIF4E(3) and cyv. In strain: Jolanda, Imuna and Evolutie, allele desc. In strain: IVT 7214, B/R RIL 105-25, USWK-6 and USWKH x H S4, allele bc-3." evidence="6">
    <original>AI</original>
    <variation>VV</variation>
    <location>
        <begin position="229"/>
        <end position="230"/>
    </location>
</feature>
<gene>
    <name evidence="7 8" type="primary">eIF4E</name>
    <name evidence="12" type="ORF">PHAVU_006G168400g</name>
</gene>
<reference key="1">
    <citation type="journal article" date="2013" name="Theor. Appl. Genet.">
        <title>A series of eIF4E alleles at the Bc-3 locus are associated with recessive resistance to Clover yellow vein virus in common bean.</title>
        <authorList>
            <person name="Hart J.P."/>
            <person name="Griffiths P.D."/>
        </authorList>
    </citation>
    <scope>NUCLEOTIDE SEQUENCE [MRNA]</scope>
    <scope>FUNCTION</scope>
    <scope>FUNCTION (MICROBIAL INFECTION)</scope>
    <scope>VARIANTS THR-6; LYS-53; TYR-65; GLU-76; GLY-111 AND 229-ALA-ILE-230 DELINS VAL-VAL</scope>
    <scope>SUBUNIT (MICROBIAL INFECTION)</scope>
    <scope>POLYMORPHISM</scope>
    <source>
        <strain>cv. Amanda</strain>
        <strain>cv. B/R RIL 105-25</strain>
        <strain>cv. Baby Bop</strain>
        <strain>cv. Black Knight</strain>
        <strain>cv. Clipper</strain>
        <strain>cv. CY-10 S4</strain>
        <strain>cv. Evolutie</strain>
        <strain>cv. GN 1140</strain>
        <strain>cv. Hystyle</strain>
        <strain>cv. Imuna</strain>
        <strain>cv. IVT 7214</strain>
        <strain>cv. Jolanda</strain>
        <strain>cv. Laureat</strain>
        <strain>cv. Midnight</strain>
        <strain>cv. Paloma</strain>
        <strain>cv. Polder</strain>
        <strain>cv. Sonesta</strain>
        <strain>cv. USWK-6</strain>
        <strain>cv. USWKH x H S4</strain>
    </source>
</reference>
<reference key="2">
    <citation type="journal article" date="2014" name="Nat. Genet.">
        <title>A reference genome for common bean and genome-wide analysis of dual domestications.</title>
        <authorList>
            <person name="Schmutz J."/>
            <person name="McClean P.E."/>
            <person name="Mamidi S."/>
            <person name="Wu G.A."/>
            <person name="Cannon S.B."/>
            <person name="Grimwood J."/>
            <person name="Jenkins J."/>
            <person name="Shu S."/>
            <person name="Song Q."/>
            <person name="Chavarro C."/>
            <person name="Torres-Torres M."/>
            <person name="Geffroy V."/>
            <person name="Moghaddam S.M."/>
            <person name="Gao D."/>
            <person name="Abernathy B."/>
            <person name="Barry K."/>
            <person name="Blair M."/>
            <person name="Brick M.A."/>
            <person name="Chovatia M."/>
            <person name="Gepts P."/>
            <person name="Goodstein D.M."/>
            <person name="Gonzales M."/>
            <person name="Hellsten U."/>
            <person name="Hyten D.L."/>
            <person name="Jia G."/>
            <person name="Kelly J.D."/>
            <person name="Kudrna D."/>
            <person name="Lee R."/>
            <person name="Richard M.M."/>
            <person name="Miklas P.N."/>
            <person name="Osorno J.M."/>
            <person name="Rodrigues J."/>
            <person name="Thareau V."/>
            <person name="Urrea C.A."/>
            <person name="Wang M."/>
            <person name="Yu Y."/>
            <person name="Zhang M."/>
            <person name="Wing R.A."/>
            <person name="Cregan P.B."/>
            <person name="Rokhsar D.S."/>
            <person name="Jackson S.A."/>
        </authorList>
    </citation>
    <scope>NUCLEOTIDE SEQUENCE [LARGE SCALE GENOMIC DNA]</scope>
    <source>
        <strain>cv. G19833</strain>
    </source>
</reference>
<reference key="3">
    <citation type="journal article" date="2010" name="Mol. Plant Pathol.">
        <title>Potyviral resistance derived from cultivars of Phaseolus vulgaris carrying bc-3 is associated with the homozygotic presence of a mutated eIF4E allele.</title>
        <authorList>
            <person name="Naderpour M."/>
            <person name="Lund O.S."/>
            <person name="Larsen R."/>
            <person name="Johansen E."/>
        </authorList>
    </citation>
    <scope>NUCLEOTIDE SEQUENCE [MRNA] OF 8-222</scope>
    <scope>FUNCTION</scope>
    <scope>FUNCTION (MICROBIAL INFECTION)</scope>
    <scope>VARIANTS LYS-53; TYR-65; GLU-76 AND GLY-111</scope>
    <scope>SUBUNIT (MICROBIAL INFECTION)</scope>
    <scope>POLYMORPHISM</scope>
    <source>
        <strain>cv. Dubbele Witte</strain>
        <strain>cv. I9365-31</strain>
        <strain>cv. IVT7214</strain>
        <strain>cv. Othello</strain>
        <strain>cv. Raven</strain>
        <strain>cv. Sanilac</strain>
        <strain>cv. Stringless Green Refugee</strain>
        <strain>cv. Topcrop</strain>
        <strain>cv. USCR7</strain>
        <strain>cv. USCR8</strain>
        <strain>cv. USLK1</strain>
        <strain>cv. Widusa</strain>
    </source>
</reference>
<reference key="4">
    <citation type="journal article" date="2014" name="Infect. Genet. Evol.">
        <title>Evolution of plant eukaryotic initiation factor 4E (eIF4E) and potyvirus genome-linked protein (VPg): a game of mirrors impacting resistance spectrum and durability.</title>
        <authorList>
            <person name="Moury B."/>
            <person name="Charron C."/>
            <person name="Janzac B."/>
            <person name="Simon V."/>
            <person name="Gallois J.L."/>
            <person name="Palloix A."/>
            <person name="Caranta C."/>
        </authorList>
    </citation>
    <scope>GENE FAMILY</scope>
    <scope>REVIEW</scope>
</reference>